<feature type="signal peptide" description="Tat-type signal" evidence="1">
    <location>
        <begin position="1"/>
        <end position="33"/>
    </location>
</feature>
<feature type="chain" id="PRO_1000069719" description="Periplasmic nitrate reductase" evidence="1">
    <location>
        <begin position="34"/>
        <end position="827"/>
    </location>
</feature>
<feature type="domain" description="4Fe-4S Mo/W bis-MGD-type" evidence="1">
    <location>
        <begin position="37"/>
        <end position="93"/>
    </location>
</feature>
<feature type="binding site" evidence="1">
    <location>
        <position position="44"/>
    </location>
    <ligand>
        <name>[4Fe-4S] cluster</name>
        <dbReference type="ChEBI" id="CHEBI:49883"/>
    </ligand>
</feature>
<feature type="binding site" evidence="1">
    <location>
        <position position="47"/>
    </location>
    <ligand>
        <name>[4Fe-4S] cluster</name>
        <dbReference type="ChEBI" id="CHEBI:49883"/>
    </ligand>
</feature>
<feature type="binding site" evidence="1">
    <location>
        <position position="51"/>
    </location>
    <ligand>
        <name>[4Fe-4S] cluster</name>
        <dbReference type="ChEBI" id="CHEBI:49883"/>
    </ligand>
</feature>
<feature type="binding site" evidence="1">
    <location>
        <position position="79"/>
    </location>
    <ligand>
        <name>[4Fe-4S] cluster</name>
        <dbReference type="ChEBI" id="CHEBI:49883"/>
    </ligand>
</feature>
<feature type="binding site" evidence="1">
    <location>
        <position position="81"/>
    </location>
    <ligand>
        <name>Mo-bis(molybdopterin guanine dinucleotide)</name>
        <dbReference type="ChEBI" id="CHEBI:60539"/>
    </ligand>
</feature>
<feature type="binding site" evidence="1">
    <location>
        <position position="148"/>
    </location>
    <ligand>
        <name>Mo-bis(molybdopterin guanine dinucleotide)</name>
        <dbReference type="ChEBI" id="CHEBI:60539"/>
    </ligand>
</feature>
<feature type="binding site" evidence="1">
    <location>
        <position position="173"/>
    </location>
    <ligand>
        <name>Mo-bis(molybdopterin guanine dinucleotide)</name>
        <dbReference type="ChEBI" id="CHEBI:60539"/>
    </ligand>
</feature>
<feature type="binding site" evidence="1">
    <location>
        <position position="177"/>
    </location>
    <ligand>
        <name>Mo-bis(molybdopterin guanine dinucleotide)</name>
        <dbReference type="ChEBI" id="CHEBI:60539"/>
    </ligand>
</feature>
<feature type="binding site" evidence="1">
    <location>
        <begin position="210"/>
        <end position="217"/>
    </location>
    <ligand>
        <name>Mo-bis(molybdopterin guanine dinucleotide)</name>
        <dbReference type="ChEBI" id="CHEBI:60539"/>
    </ligand>
</feature>
<feature type="binding site" evidence="1">
    <location>
        <begin position="241"/>
        <end position="245"/>
    </location>
    <ligand>
        <name>Mo-bis(molybdopterin guanine dinucleotide)</name>
        <dbReference type="ChEBI" id="CHEBI:60539"/>
    </ligand>
</feature>
<feature type="binding site" evidence="1">
    <location>
        <begin position="260"/>
        <end position="262"/>
    </location>
    <ligand>
        <name>Mo-bis(molybdopterin guanine dinucleotide)</name>
        <dbReference type="ChEBI" id="CHEBI:60539"/>
    </ligand>
</feature>
<feature type="binding site" evidence="1">
    <location>
        <position position="370"/>
    </location>
    <ligand>
        <name>Mo-bis(molybdopterin guanine dinucleotide)</name>
        <dbReference type="ChEBI" id="CHEBI:60539"/>
    </ligand>
</feature>
<feature type="binding site" evidence="1">
    <location>
        <position position="374"/>
    </location>
    <ligand>
        <name>Mo-bis(molybdopterin guanine dinucleotide)</name>
        <dbReference type="ChEBI" id="CHEBI:60539"/>
    </ligand>
</feature>
<feature type="binding site" evidence="1">
    <location>
        <position position="480"/>
    </location>
    <ligand>
        <name>Mo-bis(molybdopterin guanine dinucleotide)</name>
        <dbReference type="ChEBI" id="CHEBI:60539"/>
    </ligand>
</feature>
<feature type="binding site" evidence="1">
    <location>
        <begin position="506"/>
        <end position="507"/>
    </location>
    <ligand>
        <name>Mo-bis(molybdopterin guanine dinucleotide)</name>
        <dbReference type="ChEBI" id="CHEBI:60539"/>
    </ligand>
</feature>
<feature type="binding site" evidence="1">
    <location>
        <position position="529"/>
    </location>
    <ligand>
        <name>Mo-bis(molybdopterin guanine dinucleotide)</name>
        <dbReference type="ChEBI" id="CHEBI:60539"/>
    </ligand>
</feature>
<feature type="binding site" evidence="1">
    <location>
        <position position="556"/>
    </location>
    <ligand>
        <name>Mo-bis(molybdopterin guanine dinucleotide)</name>
        <dbReference type="ChEBI" id="CHEBI:60539"/>
    </ligand>
</feature>
<feature type="binding site" evidence="1">
    <location>
        <begin position="716"/>
        <end position="725"/>
    </location>
    <ligand>
        <name>Mo-bis(molybdopterin guanine dinucleotide)</name>
        <dbReference type="ChEBI" id="CHEBI:60539"/>
    </ligand>
</feature>
<feature type="binding site" evidence="1">
    <location>
        <position position="792"/>
    </location>
    <ligand>
        <name>substrate</name>
    </ligand>
</feature>
<feature type="binding site" evidence="1">
    <location>
        <position position="800"/>
    </location>
    <ligand>
        <name>Mo-bis(molybdopterin guanine dinucleotide)</name>
        <dbReference type="ChEBI" id="CHEBI:60539"/>
    </ligand>
</feature>
<feature type="binding site" evidence="1">
    <location>
        <position position="817"/>
    </location>
    <ligand>
        <name>Mo-bis(molybdopterin guanine dinucleotide)</name>
        <dbReference type="ChEBI" id="CHEBI:60539"/>
    </ligand>
</feature>
<gene>
    <name evidence="1" type="primary">napA</name>
    <name type="ordered locus">CGSHiEE_01280</name>
</gene>
<keyword id="KW-0004">4Fe-4S</keyword>
<keyword id="KW-0249">Electron transport</keyword>
<keyword id="KW-0408">Iron</keyword>
<keyword id="KW-0411">Iron-sulfur</keyword>
<keyword id="KW-0479">Metal-binding</keyword>
<keyword id="KW-0500">Molybdenum</keyword>
<keyword id="KW-0534">Nitrate assimilation</keyword>
<keyword id="KW-0560">Oxidoreductase</keyword>
<keyword id="KW-0574">Periplasm</keyword>
<keyword id="KW-0732">Signal</keyword>
<keyword id="KW-0813">Transport</keyword>
<organism>
    <name type="scientific">Haemophilus influenzae (strain PittEE)</name>
    <dbReference type="NCBI Taxonomy" id="374930"/>
    <lineage>
        <taxon>Bacteria</taxon>
        <taxon>Pseudomonadati</taxon>
        <taxon>Pseudomonadota</taxon>
        <taxon>Gammaproteobacteria</taxon>
        <taxon>Pasteurellales</taxon>
        <taxon>Pasteurellaceae</taxon>
        <taxon>Haemophilus</taxon>
    </lineage>
</organism>
<sequence>MNLSRRDFMKANAAMAAATAAGLTIPVKNVVAAESEIKWDKGVCRFCGTGCAVLVGTKDGRVVASQGDPDAEVNRGLNCIKGYFLPKIMYGKDRLTQPLLRMTNGKFDKNGDFAPVSWDFAFKTMAEKFKEAFKKNGQNAVGMFSSGQSTIWEGYAKNKLWKAGFRSNNVDPNARHCMASAAVAFMRTFGMDEPMGCYDDIEQADAFVLWGSNMAEMHPILWSRITDRRISNPDVRVTVLSTYEHRSFELADHGLIFTPQTDLAIMNYIINYLIQNNAINWDFVNKHTKFKRGETNIGYGLRPEHPLEKDTNRKTAGKMHDSSFEELKQLVSEYTVEKVSQMSGLDKVQLETLAKLYADPTKKVVSYWTMGFNQHTRGVWVNQLIYNIHLLTGKISIPGCGPFSLTGQPSACGTAREVGSFPHRLPADLVVTNPKHREIAERIWKLPKGTVSEKVGLHTIAQDRAMNDGKMNVLWQMCNNNMQAGPNINQERLPGWRKEGNFVIVSDPYPTVSALSADLILPTAMWVEKEGAYGNAERRTQFWRQQVKAPGEAKSDLWQLMEFAKYFTTDEMWTEELLAQMPEYRGKTLYEVLFKNGQVDKFPLSELAEGQLNDESEYFGYYVHKGLFEEYAEFGRGHGHDLAPFDMYHKARGLRWPVVEGKETLWRYREGYDPYVKEGEGVAFYGYPDKKAIILAVPYEPPAESPDNEYDLWLSTGRVLEHWHTGTMTRRVPELHRAFPNNLVWMHPLDAQARGLRHGDKIKISSRRGEMISYLDTRGRNKPPRGLVFTTFFDAGQLANNLTLDATDPISKETDFKKCAVKVEKAA</sequence>
<protein>
    <recommendedName>
        <fullName evidence="1">Periplasmic nitrate reductase</fullName>
        <ecNumber evidence="1">1.9.6.1</ecNumber>
    </recommendedName>
</protein>
<proteinExistence type="inferred from homology"/>
<accession>A5UAE1</accession>
<dbReference type="EC" id="1.9.6.1" evidence="1"/>
<dbReference type="EMBL" id="CP000671">
    <property type="protein sequence ID" value="ABQ97742.1"/>
    <property type="molecule type" value="Genomic_DNA"/>
</dbReference>
<dbReference type="SMR" id="A5UAE1"/>
<dbReference type="KEGG" id="hip:CGSHiEE_01280"/>
<dbReference type="HOGENOM" id="CLU_000422_13_4_6"/>
<dbReference type="GO" id="GO:0016020">
    <property type="term" value="C:membrane"/>
    <property type="evidence" value="ECO:0007669"/>
    <property type="project" value="TreeGrafter"/>
</dbReference>
<dbReference type="GO" id="GO:0009325">
    <property type="term" value="C:nitrate reductase complex"/>
    <property type="evidence" value="ECO:0007669"/>
    <property type="project" value="TreeGrafter"/>
</dbReference>
<dbReference type="GO" id="GO:0042597">
    <property type="term" value="C:periplasmic space"/>
    <property type="evidence" value="ECO:0007669"/>
    <property type="project" value="UniProtKB-SubCell"/>
</dbReference>
<dbReference type="GO" id="GO:0051539">
    <property type="term" value="F:4 iron, 4 sulfur cluster binding"/>
    <property type="evidence" value="ECO:0007669"/>
    <property type="project" value="UniProtKB-KW"/>
</dbReference>
<dbReference type="GO" id="GO:0009055">
    <property type="term" value="F:electron transfer activity"/>
    <property type="evidence" value="ECO:0007669"/>
    <property type="project" value="UniProtKB-UniRule"/>
</dbReference>
<dbReference type="GO" id="GO:0005506">
    <property type="term" value="F:iron ion binding"/>
    <property type="evidence" value="ECO:0007669"/>
    <property type="project" value="UniProtKB-UniRule"/>
</dbReference>
<dbReference type="GO" id="GO:0030151">
    <property type="term" value="F:molybdenum ion binding"/>
    <property type="evidence" value="ECO:0007669"/>
    <property type="project" value="InterPro"/>
</dbReference>
<dbReference type="GO" id="GO:0043546">
    <property type="term" value="F:molybdopterin cofactor binding"/>
    <property type="evidence" value="ECO:0007669"/>
    <property type="project" value="InterPro"/>
</dbReference>
<dbReference type="GO" id="GO:0050140">
    <property type="term" value="F:nitrate reductase (cytochrome) activity"/>
    <property type="evidence" value="ECO:0007669"/>
    <property type="project" value="UniProtKB-EC"/>
</dbReference>
<dbReference type="GO" id="GO:0045333">
    <property type="term" value="P:cellular respiration"/>
    <property type="evidence" value="ECO:0007669"/>
    <property type="project" value="UniProtKB-ARBA"/>
</dbReference>
<dbReference type="GO" id="GO:0006777">
    <property type="term" value="P:Mo-molybdopterin cofactor biosynthetic process"/>
    <property type="evidence" value="ECO:0007669"/>
    <property type="project" value="UniProtKB-UniRule"/>
</dbReference>
<dbReference type="GO" id="GO:0042128">
    <property type="term" value="P:nitrate assimilation"/>
    <property type="evidence" value="ECO:0007669"/>
    <property type="project" value="UniProtKB-UniRule"/>
</dbReference>
<dbReference type="CDD" id="cd02791">
    <property type="entry name" value="MopB_CT_Nitrate-R-NapA-like"/>
    <property type="match status" value="1"/>
</dbReference>
<dbReference type="CDD" id="cd02754">
    <property type="entry name" value="MopB_Nitrate-R-NapA-like"/>
    <property type="match status" value="1"/>
</dbReference>
<dbReference type="FunFam" id="2.40.40.20:FF:000005">
    <property type="entry name" value="Periplasmic nitrate reductase"/>
    <property type="match status" value="1"/>
</dbReference>
<dbReference type="Gene3D" id="2.40.40.20">
    <property type="match status" value="1"/>
</dbReference>
<dbReference type="Gene3D" id="3.30.200.210">
    <property type="match status" value="1"/>
</dbReference>
<dbReference type="Gene3D" id="3.40.50.740">
    <property type="match status" value="1"/>
</dbReference>
<dbReference type="Gene3D" id="3.40.228.10">
    <property type="entry name" value="Dimethylsulfoxide Reductase, domain 2"/>
    <property type="match status" value="1"/>
</dbReference>
<dbReference type="HAMAP" id="MF_01630">
    <property type="entry name" value="Nitrate_reduct_NapA"/>
    <property type="match status" value="1"/>
</dbReference>
<dbReference type="InterPro" id="IPR009010">
    <property type="entry name" value="Asp_de-COase-like_dom_sf"/>
</dbReference>
<dbReference type="InterPro" id="IPR041957">
    <property type="entry name" value="CT_Nitrate-R-NapA-like"/>
</dbReference>
<dbReference type="InterPro" id="IPR006657">
    <property type="entry name" value="MoPterin_dinucl-bd_dom"/>
</dbReference>
<dbReference type="InterPro" id="IPR006656">
    <property type="entry name" value="Mopterin_OxRdtase"/>
</dbReference>
<dbReference type="InterPro" id="IPR006963">
    <property type="entry name" value="Mopterin_OxRdtase_4Fe-4S_dom"/>
</dbReference>
<dbReference type="InterPro" id="IPR010051">
    <property type="entry name" value="Periplasm_NO3_reductase_lsu"/>
</dbReference>
<dbReference type="InterPro" id="IPR050123">
    <property type="entry name" value="Prok_molybdopt-oxidoreductase"/>
</dbReference>
<dbReference type="InterPro" id="IPR006311">
    <property type="entry name" value="TAT_signal"/>
</dbReference>
<dbReference type="InterPro" id="IPR019546">
    <property type="entry name" value="TAT_signal_bac_arc"/>
</dbReference>
<dbReference type="NCBIfam" id="TIGR01706">
    <property type="entry name" value="NAPA"/>
    <property type="match status" value="1"/>
</dbReference>
<dbReference type="NCBIfam" id="NF010055">
    <property type="entry name" value="PRK13532.1"/>
    <property type="match status" value="1"/>
</dbReference>
<dbReference type="NCBIfam" id="TIGR01409">
    <property type="entry name" value="TAT_signal_seq"/>
    <property type="match status" value="1"/>
</dbReference>
<dbReference type="PANTHER" id="PTHR43105:SF11">
    <property type="entry name" value="PERIPLASMIC NITRATE REDUCTASE"/>
    <property type="match status" value="1"/>
</dbReference>
<dbReference type="PANTHER" id="PTHR43105">
    <property type="entry name" value="RESPIRATORY NITRATE REDUCTASE"/>
    <property type="match status" value="1"/>
</dbReference>
<dbReference type="Pfam" id="PF04879">
    <property type="entry name" value="Molybdop_Fe4S4"/>
    <property type="match status" value="1"/>
</dbReference>
<dbReference type="Pfam" id="PF00384">
    <property type="entry name" value="Molybdopterin"/>
    <property type="match status" value="1"/>
</dbReference>
<dbReference type="Pfam" id="PF01568">
    <property type="entry name" value="Molydop_binding"/>
    <property type="match status" value="1"/>
</dbReference>
<dbReference type="SMART" id="SM00926">
    <property type="entry name" value="Molybdop_Fe4S4"/>
    <property type="match status" value="1"/>
</dbReference>
<dbReference type="SUPFAM" id="SSF50692">
    <property type="entry name" value="ADC-like"/>
    <property type="match status" value="1"/>
</dbReference>
<dbReference type="SUPFAM" id="SSF53706">
    <property type="entry name" value="Formate dehydrogenase/DMSO reductase, domains 1-3"/>
    <property type="match status" value="1"/>
</dbReference>
<dbReference type="PROSITE" id="PS51669">
    <property type="entry name" value="4FE4S_MOW_BIS_MGD"/>
    <property type="match status" value="1"/>
</dbReference>
<dbReference type="PROSITE" id="PS51318">
    <property type="entry name" value="TAT"/>
    <property type="match status" value="1"/>
</dbReference>
<evidence type="ECO:0000255" key="1">
    <source>
        <dbReference type="HAMAP-Rule" id="MF_01630"/>
    </source>
</evidence>
<name>NAPA_HAEIE</name>
<reference key="1">
    <citation type="journal article" date="2007" name="Genome Biol.">
        <title>Characterization and modeling of the Haemophilus influenzae core and supragenomes based on the complete genomic sequences of Rd and 12 clinical nontypeable strains.</title>
        <authorList>
            <person name="Hogg J.S."/>
            <person name="Hu F.Z."/>
            <person name="Janto B."/>
            <person name="Boissy R."/>
            <person name="Hayes J."/>
            <person name="Keefe R."/>
            <person name="Post J.C."/>
            <person name="Ehrlich G.D."/>
        </authorList>
    </citation>
    <scope>NUCLEOTIDE SEQUENCE [LARGE SCALE GENOMIC DNA]</scope>
    <source>
        <strain>PittEE</strain>
    </source>
</reference>
<comment type="function">
    <text evidence="1">Catalytic subunit of the periplasmic nitrate reductase complex NapAB. Receives electrons from NapB and catalyzes the reduction of nitrate to nitrite.</text>
</comment>
<comment type="catalytic activity">
    <reaction evidence="1">
        <text>2 Fe(II)-[cytochrome] + nitrate + 2 H(+) = 2 Fe(III)-[cytochrome] + nitrite + H2O</text>
        <dbReference type="Rhea" id="RHEA:12909"/>
        <dbReference type="Rhea" id="RHEA-COMP:11777"/>
        <dbReference type="Rhea" id="RHEA-COMP:11778"/>
        <dbReference type="ChEBI" id="CHEBI:15377"/>
        <dbReference type="ChEBI" id="CHEBI:15378"/>
        <dbReference type="ChEBI" id="CHEBI:16301"/>
        <dbReference type="ChEBI" id="CHEBI:17632"/>
        <dbReference type="ChEBI" id="CHEBI:29033"/>
        <dbReference type="ChEBI" id="CHEBI:29034"/>
        <dbReference type="EC" id="1.9.6.1"/>
    </reaction>
</comment>
<comment type="cofactor">
    <cofactor evidence="1">
        <name>[4Fe-4S] cluster</name>
        <dbReference type="ChEBI" id="CHEBI:49883"/>
    </cofactor>
    <text evidence="1">Binds 1 [4Fe-4S] cluster.</text>
</comment>
<comment type="cofactor">
    <cofactor evidence="1">
        <name>Mo-bis(molybdopterin guanine dinucleotide)</name>
        <dbReference type="ChEBI" id="CHEBI:60539"/>
    </cofactor>
    <text evidence="1">Binds 1 molybdenum-bis(molybdopterin guanine dinucleotide) (Mo-bis-MGD) cofactor per subunit.</text>
</comment>
<comment type="subunit">
    <text evidence="1">Component of the periplasmic nitrate reductase NapAB complex composed of NapA and NapB.</text>
</comment>
<comment type="subcellular location">
    <subcellularLocation>
        <location evidence="1">Periplasm</location>
    </subcellularLocation>
</comment>
<comment type="PTM">
    <text evidence="1">Predicted to be exported by the Tat system. The position of the signal peptide cleavage has not been experimentally proven.</text>
</comment>
<comment type="similarity">
    <text evidence="1">Belongs to the prokaryotic molybdopterin-containing oxidoreductase family. NasA/NapA/NarB subfamily.</text>
</comment>